<organism>
    <name type="scientific">Paraburkholderia phymatum (strain DSM 17167 / CIP 108236 / LMG 21445 / STM815)</name>
    <name type="common">Burkholderia phymatum</name>
    <dbReference type="NCBI Taxonomy" id="391038"/>
    <lineage>
        <taxon>Bacteria</taxon>
        <taxon>Pseudomonadati</taxon>
        <taxon>Pseudomonadota</taxon>
        <taxon>Betaproteobacteria</taxon>
        <taxon>Burkholderiales</taxon>
        <taxon>Burkholderiaceae</taxon>
        <taxon>Paraburkholderia</taxon>
    </lineage>
</organism>
<reference key="1">
    <citation type="journal article" date="2014" name="Stand. Genomic Sci.">
        <title>Complete genome sequence of Burkholderia phymatum STM815(T), a broad host range and efficient nitrogen-fixing symbiont of Mimosa species.</title>
        <authorList>
            <person name="Moulin L."/>
            <person name="Klonowska A."/>
            <person name="Caroline B."/>
            <person name="Booth K."/>
            <person name="Vriezen J.A."/>
            <person name="Melkonian R."/>
            <person name="James E.K."/>
            <person name="Young J.P."/>
            <person name="Bena G."/>
            <person name="Hauser L."/>
            <person name="Land M."/>
            <person name="Kyrpides N."/>
            <person name="Bruce D."/>
            <person name="Chain P."/>
            <person name="Copeland A."/>
            <person name="Pitluck S."/>
            <person name="Woyke T."/>
            <person name="Lizotte-Waniewski M."/>
            <person name="Bristow J."/>
            <person name="Riley M."/>
        </authorList>
    </citation>
    <scope>NUCLEOTIDE SEQUENCE [LARGE SCALE GENOMIC DNA]</scope>
    <source>
        <strain>DSM 17167 / CIP 108236 / LMG 21445 / STM815</strain>
    </source>
</reference>
<comment type="catalytic activity">
    <reaction evidence="1">
        <text>(S)-2,3,4,5-tetrahydrodipicolinate + succinyl-CoA + H2O = (S)-2-succinylamino-6-oxoheptanedioate + CoA</text>
        <dbReference type="Rhea" id="RHEA:17325"/>
        <dbReference type="ChEBI" id="CHEBI:15377"/>
        <dbReference type="ChEBI" id="CHEBI:15685"/>
        <dbReference type="ChEBI" id="CHEBI:16845"/>
        <dbReference type="ChEBI" id="CHEBI:57287"/>
        <dbReference type="ChEBI" id="CHEBI:57292"/>
        <dbReference type="EC" id="2.3.1.117"/>
    </reaction>
</comment>
<comment type="pathway">
    <text evidence="1">Amino-acid biosynthesis; L-lysine biosynthesis via DAP pathway; LL-2,6-diaminopimelate from (S)-tetrahydrodipicolinate (succinylase route): step 1/3.</text>
</comment>
<comment type="subcellular location">
    <subcellularLocation>
        <location evidence="1">Cytoplasm</location>
    </subcellularLocation>
</comment>
<comment type="similarity">
    <text evidence="1">Belongs to the transferase hexapeptide repeat family.</text>
</comment>
<name>DAPD_PARP8</name>
<protein>
    <recommendedName>
        <fullName evidence="1">2,3,4,5-tetrahydropyridine-2,6-dicarboxylate N-succinyltransferase</fullName>
        <ecNumber evidence="1">2.3.1.117</ecNumber>
    </recommendedName>
    <alternativeName>
        <fullName evidence="1">Tetrahydrodipicolinate N-succinyltransferase</fullName>
        <shortName evidence="1">THP succinyltransferase</shortName>
        <shortName evidence="1">Tetrahydropicolinate succinylase</shortName>
    </alternativeName>
</protein>
<dbReference type="EC" id="2.3.1.117" evidence="1"/>
<dbReference type="EMBL" id="CP001043">
    <property type="protein sequence ID" value="ACC70531.1"/>
    <property type="molecule type" value="Genomic_DNA"/>
</dbReference>
<dbReference type="RefSeq" id="WP_012400745.1">
    <property type="nucleotide sequence ID" value="NC_010622.1"/>
</dbReference>
<dbReference type="SMR" id="B2JID7"/>
<dbReference type="STRING" id="391038.Bphy_1349"/>
<dbReference type="KEGG" id="bph:Bphy_1349"/>
<dbReference type="eggNOG" id="COG2171">
    <property type="taxonomic scope" value="Bacteria"/>
</dbReference>
<dbReference type="HOGENOM" id="CLU_050859_0_1_4"/>
<dbReference type="OrthoDB" id="9775362at2"/>
<dbReference type="UniPathway" id="UPA00034">
    <property type="reaction ID" value="UER00019"/>
</dbReference>
<dbReference type="Proteomes" id="UP000001192">
    <property type="component" value="Chromosome 1"/>
</dbReference>
<dbReference type="GO" id="GO:0005737">
    <property type="term" value="C:cytoplasm"/>
    <property type="evidence" value="ECO:0007669"/>
    <property type="project" value="UniProtKB-SubCell"/>
</dbReference>
<dbReference type="GO" id="GO:0008666">
    <property type="term" value="F:2,3,4,5-tetrahydropyridine-2,6-dicarboxylate N-succinyltransferase activity"/>
    <property type="evidence" value="ECO:0007669"/>
    <property type="project" value="UniProtKB-UniRule"/>
</dbReference>
<dbReference type="GO" id="GO:0016779">
    <property type="term" value="F:nucleotidyltransferase activity"/>
    <property type="evidence" value="ECO:0007669"/>
    <property type="project" value="TreeGrafter"/>
</dbReference>
<dbReference type="GO" id="GO:0019877">
    <property type="term" value="P:diaminopimelate biosynthetic process"/>
    <property type="evidence" value="ECO:0007669"/>
    <property type="project" value="UniProtKB-UniRule"/>
</dbReference>
<dbReference type="GO" id="GO:0009089">
    <property type="term" value="P:lysine biosynthetic process via diaminopimelate"/>
    <property type="evidence" value="ECO:0007669"/>
    <property type="project" value="UniProtKB-UniRule"/>
</dbReference>
<dbReference type="CDD" id="cd03350">
    <property type="entry name" value="LbH_THP_succinylT"/>
    <property type="match status" value="1"/>
</dbReference>
<dbReference type="Gene3D" id="2.160.10.10">
    <property type="entry name" value="Hexapeptide repeat proteins"/>
    <property type="match status" value="1"/>
</dbReference>
<dbReference type="Gene3D" id="1.10.166.10">
    <property type="entry name" value="Tetrahydrodipicolinate-N-succinyltransferase, N-terminal domain"/>
    <property type="match status" value="1"/>
</dbReference>
<dbReference type="HAMAP" id="MF_00811">
    <property type="entry name" value="DapD"/>
    <property type="match status" value="1"/>
</dbReference>
<dbReference type="InterPro" id="IPR005664">
    <property type="entry name" value="DapD_Trfase_Hexpep_rpt_fam"/>
</dbReference>
<dbReference type="InterPro" id="IPR001451">
    <property type="entry name" value="Hexapep"/>
</dbReference>
<dbReference type="InterPro" id="IPR018357">
    <property type="entry name" value="Hexapep_transf_CS"/>
</dbReference>
<dbReference type="InterPro" id="IPR023180">
    <property type="entry name" value="THP_succinylTrfase_dom1"/>
</dbReference>
<dbReference type="InterPro" id="IPR037133">
    <property type="entry name" value="THP_succinylTrfase_N_sf"/>
</dbReference>
<dbReference type="InterPro" id="IPR011004">
    <property type="entry name" value="Trimer_LpxA-like_sf"/>
</dbReference>
<dbReference type="NCBIfam" id="TIGR00965">
    <property type="entry name" value="dapD"/>
    <property type="match status" value="1"/>
</dbReference>
<dbReference type="NCBIfam" id="NF008808">
    <property type="entry name" value="PRK11830.1"/>
    <property type="match status" value="1"/>
</dbReference>
<dbReference type="PANTHER" id="PTHR19136:SF52">
    <property type="entry name" value="2,3,4,5-TETRAHYDROPYRIDINE-2,6-DICARBOXYLATE N-SUCCINYLTRANSFERASE"/>
    <property type="match status" value="1"/>
</dbReference>
<dbReference type="PANTHER" id="PTHR19136">
    <property type="entry name" value="MOLYBDENUM COFACTOR GUANYLYLTRANSFERASE"/>
    <property type="match status" value="1"/>
</dbReference>
<dbReference type="Pfam" id="PF14602">
    <property type="entry name" value="Hexapep_2"/>
    <property type="match status" value="1"/>
</dbReference>
<dbReference type="Pfam" id="PF14805">
    <property type="entry name" value="THDPS_N_2"/>
    <property type="match status" value="1"/>
</dbReference>
<dbReference type="SUPFAM" id="SSF51161">
    <property type="entry name" value="Trimeric LpxA-like enzymes"/>
    <property type="match status" value="1"/>
</dbReference>
<dbReference type="PROSITE" id="PS00101">
    <property type="entry name" value="HEXAPEP_TRANSFERASES"/>
    <property type="match status" value="1"/>
</dbReference>
<sequence length="275" mass="29471">MSQQLQQIIDNAWDNRADLSPKAAPADVREAVAHAIEQLDKGALRVAEKKDGDWVVNQWLKKAVLLSFRLEDNAPMPAGGYSQFYDKVPSKFANYTAEDFAAGGFRVVPPAIARRGSYIAKNVVLMPSYTNIGAYVDEGTMVDTWATVGSCAQIGKNVHLSGGVGIGGVLEPLQANPVIIEDNCFIGARSEVVEGVIVEENSVISMGVYLGQSTKIYDRETGEVSYGRIPAGSVVVAGNLPSKDGSHSLYCAVIVKKVDAKTRAKVGLNELLRGD</sequence>
<gene>
    <name evidence="1" type="primary">dapD</name>
    <name type="ordered locus">Bphy_1349</name>
</gene>
<proteinExistence type="inferred from homology"/>
<accession>B2JID7</accession>
<evidence type="ECO:0000255" key="1">
    <source>
        <dbReference type="HAMAP-Rule" id="MF_00811"/>
    </source>
</evidence>
<feature type="chain" id="PRO_1000134035" description="2,3,4,5-tetrahydropyridine-2,6-dicarboxylate N-succinyltransferase">
    <location>
        <begin position="1"/>
        <end position="275"/>
    </location>
</feature>
<keyword id="KW-0012">Acyltransferase</keyword>
<keyword id="KW-0028">Amino-acid biosynthesis</keyword>
<keyword id="KW-0963">Cytoplasm</keyword>
<keyword id="KW-0220">Diaminopimelate biosynthesis</keyword>
<keyword id="KW-0457">Lysine biosynthesis</keyword>
<keyword id="KW-1185">Reference proteome</keyword>
<keyword id="KW-0677">Repeat</keyword>
<keyword id="KW-0808">Transferase</keyword>